<keyword id="KW-0240">DNA-directed RNA polymerase</keyword>
<keyword id="KW-1035">Host cytoplasm</keyword>
<keyword id="KW-0804">Transcription</keyword>
<keyword id="KW-0946">Virion</keyword>
<gene>
    <name type="ordered locus">Mal-077</name>
    <name type="ORF">g6L</name>
</gene>
<organism>
    <name type="scientific">African swine fever virus (isolate Tick/Malawi/Lil 20-1/1983)</name>
    <name type="common">ASFV</name>
    <dbReference type="NCBI Taxonomy" id="10500"/>
    <lineage>
        <taxon>Viruses</taxon>
        <taxon>Varidnaviria</taxon>
        <taxon>Bamfordvirae</taxon>
        <taxon>Nucleocytoviricota</taxon>
        <taxon>Pokkesviricetes</taxon>
        <taxon>Asfuvirales</taxon>
        <taxon>Asfarviridae</taxon>
        <taxon>Asfivirus</taxon>
        <taxon>African swine fever virus</taxon>
    </lineage>
</organism>
<accession>P0C9D6</accession>
<accession>Q08399</accession>
<dbReference type="EMBL" id="AY261361">
    <property type="status" value="NOT_ANNOTATED_CDS"/>
    <property type="molecule type" value="Genomic_DNA"/>
</dbReference>
<dbReference type="EMBL" id="L15411">
    <property type="protein sequence ID" value="AAA42731.1"/>
    <property type="status" value="ALT_TERM"/>
    <property type="molecule type" value="Genomic_DNA"/>
</dbReference>
<dbReference type="SMR" id="P0C9D6"/>
<dbReference type="Proteomes" id="UP000000860">
    <property type="component" value="Segment"/>
</dbReference>
<dbReference type="GO" id="GO:0000428">
    <property type="term" value="C:DNA-directed RNA polymerase complex"/>
    <property type="evidence" value="ECO:0007669"/>
    <property type="project" value="UniProtKB-KW"/>
</dbReference>
<dbReference type="GO" id="GO:0030430">
    <property type="term" value="C:host cell cytoplasm"/>
    <property type="evidence" value="ECO:0007669"/>
    <property type="project" value="UniProtKB-SubCell"/>
</dbReference>
<dbReference type="GO" id="GO:0044423">
    <property type="term" value="C:virion component"/>
    <property type="evidence" value="ECO:0007669"/>
    <property type="project" value="UniProtKB-KW"/>
</dbReference>
<dbReference type="GO" id="GO:0003677">
    <property type="term" value="F:DNA binding"/>
    <property type="evidence" value="ECO:0007669"/>
    <property type="project" value="InterPro"/>
</dbReference>
<dbReference type="GO" id="GO:0003899">
    <property type="term" value="F:DNA-directed RNA polymerase activity"/>
    <property type="evidence" value="ECO:0007669"/>
    <property type="project" value="InterPro"/>
</dbReference>
<dbReference type="GO" id="GO:0006360">
    <property type="term" value="P:transcription by RNA polymerase I"/>
    <property type="evidence" value="ECO:0007669"/>
    <property type="project" value="TreeGrafter"/>
</dbReference>
<dbReference type="GO" id="GO:0006366">
    <property type="term" value="P:transcription by RNA polymerase II"/>
    <property type="evidence" value="ECO:0007669"/>
    <property type="project" value="TreeGrafter"/>
</dbReference>
<dbReference type="GO" id="GO:0042797">
    <property type="term" value="P:tRNA transcription by RNA polymerase III"/>
    <property type="evidence" value="ECO:0007669"/>
    <property type="project" value="TreeGrafter"/>
</dbReference>
<dbReference type="Gene3D" id="3.90.940.10">
    <property type="match status" value="1"/>
</dbReference>
<dbReference type="InterPro" id="IPR020708">
    <property type="entry name" value="DNA-dir_RNA_polK_14-18kDa_CS"/>
</dbReference>
<dbReference type="InterPro" id="IPR006110">
    <property type="entry name" value="Pol_omega/Rpo6/RPB6"/>
</dbReference>
<dbReference type="InterPro" id="IPR036161">
    <property type="entry name" value="RPB6/omega-like_sf"/>
</dbReference>
<dbReference type="InterPro" id="IPR006111">
    <property type="entry name" value="Rpo6/Rpb6"/>
</dbReference>
<dbReference type="PANTHER" id="PTHR47227">
    <property type="entry name" value="DNA-DIRECTED RNA POLYMERASE SUBUNIT K"/>
    <property type="match status" value="1"/>
</dbReference>
<dbReference type="PANTHER" id="PTHR47227:SF3">
    <property type="entry name" value="RNA POLYMERASE SUBUNIT, PUTATIVE-RELATED"/>
    <property type="match status" value="1"/>
</dbReference>
<dbReference type="Pfam" id="PF01192">
    <property type="entry name" value="RNA_pol_Rpb6"/>
    <property type="match status" value="1"/>
</dbReference>
<dbReference type="PIRSF" id="PIRSF000778">
    <property type="entry name" value="RpoK/RPB6"/>
    <property type="match status" value="1"/>
</dbReference>
<dbReference type="SMART" id="SM01409">
    <property type="entry name" value="RNA_pol_Rpb6"/>
    <property type="match status" value="1"/>
</dbReference>
<dbReference type="SUPFAM" id="SSF63562">
    <property type="entry name" value="RPB6/omega subunit-like"/>
    <property type="match status" value="1"/>
</dbReference>
<dbReference type="PROSITE" id="PS01111">
    <property type="entry name" value="RNA_POL_K_14KD"/>
    <property type="match status" value="1"/>
</dbReference>
<proteinExistence type="inferred from homology"/>
<protein>
    <recommendedName>
        <fullName evidence="1">DNA-directed RNA polymerase RPB6 homolog</fullName>
        <shortName evidence="1">RPB6 homolog</shortName>
    </recommendedName>
</protein>
<organismHost>
    <name type="scientific">Ornithodoros</name>
    <name type="common">relapsing fever ticks</name>
    <dbReference type="NCBI Taxonomy" id="6937"/>
</organismHost>
<organismHost>
    <name type="scientific">Phacochoerus aethiopicus</name>
    <name type="common">Warthog</name>
    <dbReference type="NCBI Taxonomy" id="85517"/>
</organismHost>
<organismHost>
    <name type="scientific">Phacochoerus africanus</name>
    <name type="common">Warthog</name>
    <dbReference type="NCBI Taxonomy" id="41426"/>
</organismHost>
<organismHost>
    <name type="scientific">Potamochoerus larvatus</name>
    <name type="common">Bushpig</name>
    <dbReference type="NCBI Taxonomy" id="273792"/>
</organismHost>
<organismHost>
    <name type="scientific">Sus scrofa</name>
    <name type="common">Pig</name>
    <dbReference type="NCBI Taxonomy" id="9823"/>
</organismHost>
<reference key="1">
    <citation type="submission" date="2003-03" db="EMBL/GenBank/DDBJ databases">
        <title>African swine fever virus genomes.</title>
        <authorList>
            <person name="Kutish G.F."/>
            <person name="Rock D.L."/>
        </authorList>
    </citation>
    <scope>NUCLEOTIDE SEQUENCE [LARGE SCALE GENOMIC DNA]</scope>
</reference>
<reference key="2">
    <citation type="journal article" date="1993" name="Nucleic Acids Res.">
        <title>An African swine fever virus gene with a similarity to eukaryotic RNA polymerase subunit 6.</title>
        <authorList>
            <person name="Lu Z."/>
            <person name="Kutish G.F."/>
            <person name="Sussman M.D."/>
            <person name="Rock D.L."/>
        </authorList>
    </citation>
    <scope>NUCLEOTIDE SEQUENCE [GENOMIC DNA] OF 1-140</scope>
</reference>
<name>RPB6_ASFM2</name>
<evidence type="ECO:0000250" key="1">
    <source>
        <dbReference type="UniProtKB" id="P42484"/>
    </source>
</evidence>
<evidence type="ECO:0000256" key="2">
    <source>
        <dbReference type="SAM" id="MobiDB-lite"/>
    </source>
</evidence>
<evidence type="ECO:0000269" key="3">
    <source>
    </source>
</evidence>
<evidence type="ECO:0000305" key="4"/>
<sequence length="151" mass="17136">MADNDNEDVIMDDLVEEYVETEEENFVDSEEESEDKSEDKDEIVESPSICEGFVQASSQTLVIIPDNERITSNVLTTFEATRLVAVRAQQLAINGSTMLKKKYSSPIDIAKQELFNRKIPLLVMRCIKVTPEGQKIVEIWNPREMGIPLLD</sequence>
<comment type="function">
    <text evidence="1">Component of the DNA-directed RNA polymerase (RNAP) that catalyzes the transcription in the cytoplasm of viral DNA into RNA using the four ribonucleoside triphosphates as substrates.</text>
</comment>
<comment type="subunit">
    <text evidence="1">Part of the viral DNA-directed RNA polymerase that consists of 8 polII-like subunits (RPB1, RPB2, RPB3, RPB5, RPB6, RPB7, RPB9, RPB10), a capping enzyme and a termination factor.</text>
</comment>
<comment type="subcellular location">
    <subcellularLocation>
        <location evidence="4">Host cytoplasm</location>
    </subcellularLocation>
    <subcellularLocation>
        <location evidence="1">Virion</location>
    </subcellularLocation>
    <text evidence="1">Found in association with viral nucleoid.</text>
</comment>
<comment type="similarity">
    <text evidence="4">Belongs to the archaeal RpoK/eukaryotic RPB6 RNA polymerase subunit family.</text>
</comment>
<comment type="sequence caution" evidence="4">
    <conflict type="erroneous termination">
        <sequence resource="EMBL-CDS" id="AAA42731"/>
    </conflict>
    <text>Truncated C-terminus.</text>
</comment>
<feature type="chain" id="PRO_0000373152" description="DNA-directed RNA polymerase RPB6 homolog">
    <location>
        <begin position="1"/>
        <end position="151"/>
    </location>
</feature>
<feature type="region of interest" description="Disordered" evidence="2">
    <location>
        <begin position="20"/>
        <end position="46"/>
    </location>
</feature>
<feature type="compositionally biased region" description="Acidic residues" evidence="2">
    <location>
        <begin position="20"/>
        <end position="44"/>
    </location>
</feature>
<feature type="sequence variant" evidence="3">
    <location>
        <begin position="140"/>
        <end position="151"/>
    </location>
</feature>